<evidence type="ECO:0000255" key="1">
    <source>
        <dbReference type="HAMAP-Rule" id="MF_01395"/>
    </source>
</evidence>
<evidence type="ECO:0000255" key="2">
    <source>
        <dbReference type="PROSITE-ProRule" id="PRU01136"/>
    </source>
</evidence>
<feature type="chain" id="PRO_0000359111" description="Acetyl-coenzyme A carboxylase carboxyl transferase subunit beta">
    <location>
        <begin position="1"/>
        <end position="304"/>
    </location>
</feature>
<feature type="domain" description="CoA carboxyltransferase N-terminal" evidence="2">
    <location>
        <begin position="25"/>
        <end position="294"/>
    </location>
</feature>
<feature type="zinc finger region" description="C4-type" evidence="1">
    <location>
        <begin position="29"/>
        <end position="51"/>
    </location>
</feature>
<feature type="binding site" evidence="1">
    <location>
        <position position="29"/>
    </location>
    <ligand>
        <name>Zn(2+)</name>
        <dbReference type="ChEBI" id="CHEBI:29105"/>
    </ligand>
</feature>
<feature type="binding site" evidence="1">
    <location>
        <position position="32"/>
    </location>
    <ligand>
        <name>Zn(2+)</name>
        <dbReference type="ChEBI" id="CHEBI:29105"/>
    </ligand>
</feature>
<feature type="binding site" evidence="1">
    <location>
        <position position="48"/>
    </location>
    <ligand>
        <name>Zn(2+)</name>
        <dbReference type="ChEBI" id="CHEBI:29105"/>
    </ligand>
</feature>
<feature type="binding site" evidence="1">
    <location>
        <position position="51"/>
    </location>
    <ligand>
        <name>Zn(2+)</name>
        <dbReference type="ChEBI" id="CHEBI:29105"/>
    </ligand>
</feature>
<sequence length="304" mass="33274">MSWIERILNKSNITQTRKASIPEGVWTKCDSCGQVLYRAELERNLEVCPKCDHHMRMSARARLHMLLDAGSEVELGSELEPKDILKFRDSKKYKDRISAAQKDTGEKDALVAMKGTLQGMPIVAASFEFAFMGGSMASVVGARFVRAVEQALEDNCPLVCFSSSGGARMQEALMSLMQMAKTSAALAKMQERGLPYISVLTDPTMGGVSASLAMLGDINIAEPKALIGFAGPRVIEQTVREKLPPGFQRSEFLIEKGAIDMIVRRPVMRQTLASILSKLTHQPQPSVVESKADTVAQPENQADV</sequence>
<reference key="1">
    <citation type="journal article" date="2007" name="PLoS Genet.">
        <title>The complete genome sequence of Yersinia pseudotuberculosis IP31758, the causative agent of Far East scarlet-like fever.</title>
        <authorList>
            <person name="Eppinger M."/>
            <person name="Rosovitz M.J."/>
            <person name="Fricke W.F."/>
            <person name="Rasko D.A."/>
            <person name="Kokorina G."/>
            <person name="Fayolle C."/>
            <person name="Lindler L.E."/>
            <person name="Carniel E."/>
            <person name="Ravel J."/>
        </authorList>
    </citation>
    <scope>NUCLEOTIDE SEQUENCE [LARGE SCALE GENOMIC DNA]</scope>
    <source>
        <strain>IP 31758</strain>
    </source>
</reference>
<organism>
    <name type="scientific">Yersinia pseudotuberculosis serotype O:1b (strain IP 31758)</name>
    <dbReference type="NCBI Taxonomy" id="349747"/>
    <lineage>
        <taxon>Bacteria</taxon>
        <taxon>Pseudomonadati</taxon>
        <taxon>Pseudomonadota</taxon>
        <taxon>Gammaproteobacteria</taxon>
        <taxon>Enterobacterales</taxon>
        <taxon>Yersiniaceae</taxon>
        <taxon>Yersinia</taxon>
    </lineage>
</organism>
<proteinExistence type="inferred from homology"/>
<protein>
    <recommendedName>
        <fullName evidence="1">Acetyl-coenzyme A carboxylase carboxyl transferase subunit beta</fullName>
        <shortName evidence="1">ACCase subunit beta</shortName>
        <shortName evidence="1">Acetyl-CoA carboxylase carboxyltransferase subunit beta</shortName>
        <ecNumber evidence="1">2.1.3.15</ecNumber>
    </recommendedName>
</protein>
<keyword id="KW-0067">ATP-binding</keyword>
<keyword id="KW-0963">Cytoplasm</keyword>
<keyword id="KW-0275">Fatty acid biosynthesis</keyword>
<keyword id="KW-0276">Fatty acid metabolism</keyword>
<keyword id="KW-0444">Lipid biosynthesis</keyword>
<keyword id="KW-0443">Lipid metabolism</keyword>
<keyword id="KW-0479">Metal-binding</keyword>
<keyword id="KW-0547">Nucleotide-binding</keyword>
<keyword id="KW-0808">Transferase</keyword>
<keyword id="KW-0862">Zinc</keyword>
<keyword id="KW-0863">Zinc-finger</keyword>
<name>ACCD_YERP3</name>
<accession>A7FGM3</accession>
<comment type="function">
    <text evidence="1">Component of the acetyl coenzyme A carboxylase (ACC) complex. Biotin carboxylase (BC) catalyzes the carboxylation of biotin on its carrier protein (BCCP) and then the CO(2) group is transferred by the transcarboxylase to acetyl-CoA to form malonyl-CoA.</text>
</comment>
<comment type="catalytic activity">
    <reaction evidence="1">
        <text>N(6)-carboxybiotinyl-L-lysyl-[protein] + acetyl-CoA = N(6)-biotinyl-L-lysyl-[protein] + malonyl-CoA</text>
        <dbReference type="Rhea" id="RHEA:54728"/>
        <dbReference type="Rhea" id="RHEA-COMP:10505"/>
        <dbReference type="Rhea" id="RHEA-COMP:10506"/>
        <dbReference type="ChEBI" id="CHEBI:57288"/>
        <dbReference type="ChEBI" id="CHEBI:57384"/>
        <dbReference type="ChEBI" id="CHEBI:83144"/>
        <dbReference type="ChEBI" id="CHEBI:83145"/>
        <dbReference type="EC" id="2.1.3.15"/>
    </reaction>
</comment>
<comment type="cofactor">
    <cofactor evidence="1">
        <name>Zn(2+)</name>
        <dbReference type="ChEBI" id="CHEBI:29105"/>
    </cofactor>
    <text evidence="1">Binds 1 zinc ion per subunit.</text>
</comment>
<comment type="pathway">
    <text evidence="1">Lipid metabolism; malonyl-CoA biosynthesis; malonyl-CoA from acetyl-CoA: step 1/1.</text>
</comment>
<comment type="subunit">
    <text evidence="1">Acetyl-CoA carboxylase is a heterohexamer composed of biotin carboxyl carrier protein (AccB), biotin carboxylase (AccC) and two subunits each of ACCase subunit alpha (AccA) and ACCase subunit beta (AccD).</text>
</comment>
<comment type="subcellular location">
    <subcellularLocation>
        <location evidence="1">Cytoplasm</location>
    </subcellularLocation>
</comment>
<comment type="similarity">
    <text evidence="1">Belongs to the AccD/PCCB family.</text>
</comment>
<dbReference type="EC" id="2.1.3.15" evidence="1"/>
<dbReference type="EMBL" id="CP000720">
    <property type="protein sequence ID" value="ABS48337.1"/>
    <property type="molecule type" value="Genomic_DNA"/>
</dbReference>
<dbReference type="RefSeq" id="WP_002209729.1">
    <property type="nucleotide sequence ID" value="NC_009708.1"/>
</dbReference>
<dbReference type="SMR" id="A7FGM3"/>
<dbReference type="GeneID" id="57975921"/>
<dbReference type="KEGG" id="ypi:YpsIP31758_1422"/>
<dbReference type="HOGENOM" id="CLU_015486_1_0_6"/>
<dbReference type="UniPathway" id="UPA00655">
    <property type="reaction ID" value="UER00711"/>
</dbReference>
<dbReference type="Proteomes" id="UP000002412">
    <property type="component" value="Chromosome"/>
</dbReference>
<dbReference type="GO" id="GO:0009329">
    <property type="term" value="C:acetate CoA-transferase complex"/>
    <property type="evidence" value="ECO:0007669"/>
    <property type="project" value="TreeGrafter"/>
</dbReference>
<dbReference type="GO" id="GO:0003989">
    <property type="term" value="F:acetyl-CoA carboxylase activity"/>
    <property type="evidence" value="ECO:0007669"/>
    <property type="project" value="InterPro"/>
</dbReference>
<dbReference type="GO" id="GO:0005524">
    <property type="term" value="F:ATP binding"/>
    <property type="evidence" value="ECO:0007669"/>
    <property type="project" value="UniProtKB-KW"/>
</dbReference>
<dbReference type="GO" id="GO:0016743">
    <property type="term" value="F:carboxyl- or carbamoyltransferase activity"/>
    <property type="evidence" value="ECO:0007669"/>
    <property type="project" value="UniProtKB-UniRule"/>
</dbReference>
<dbReference type="GO" id="GO:0008270">
    <property type="term" value="F:zinc ion binding"/>
    <property type="evidence" value="ECO:0007669"/>
    <property type="project" value="UniProtKB-UniRule"/>
</dbReference>
<dbReference type="GO" id="GO:0006633">
    <property type="term" value="P:fatty acid biosynthetic process"/>
    <property type="evidence" value="ECO:0007669"/>
    <property type="project" value="UniProtKB-KW"/>
</dbReference>
<dbReference type="GO" id="GO:2001295">
    <property type="term" value="P:malonyl-CoA biosynthetic process"/>
    <property type="evidence" value="ECO:0007669"/>
    <property type="project" value="UniProtKB-UniRule"/>
</dbReference>
<dbReference type="FunFam" id="3.90.226.10:FF:000013">
    <property type="entry name" value="Acetyl-coenzyme A carboxylase carboxyl transferase subunit beta"/>
    <property type="match status" value="1"/>
</dbReference>
<dbReference type="Gene3D" id="3.90.226.10">
    <property type="entry name" value="2-enoyl-CoA Hydratase, Chain A, domain 1"/>
    <property type="match status" value="1"/>
</dbReference>
<dbReference type="HAMAP" id="MF_01395">
    <property type="entry name" value="AcetylCoA_CT_beta"/>
    <property type="match status" value="1"/>
</dbReference>
<dbReference type="InterPro" id="IPR034733">
    <property type="entry name" value="AcCoA_carboxyl_beta"/>
</dbReference>
<dbReference type="InterPro" id="IPR000438">
    <property type="entry name" value="Acetyl_CoA_COase_Trfase_b_su"/>
</dbReference>
<dbReference type="InterPro" id="IPR029045">
    <property type="entry name" value="ClpP/crotonase-like_dom_sf"/>
</dbReference>
<dbReference type="InterPro" id="IPR011762">
    <property type="entry name" value="COA_CT_N"/>
</dbReference>
<dbReference type="InterPro" id="IPR041010">
    <property type="entry name" value="Znf-ACC"/>
</dbReference>
<dbReference type="NCBIfam" id="TIGR00515">
    <property type="entry name" value="accD"/>
    <property type="match status" value="1"/>
</dbReference>
<dbReference type="PANTHER" id="PTHR42995">
    <property type="entry name" value="ACETYL-COENZYME A CARBOXYLASE CARBOXYL TRANSFERASE SUBUNIT BETA, CHLOROPLASTIC"/>
    <property type="match status" value="1"/>
</dbReference>
<dbReference type="PANTHER" id="PTHR42995:SF5">
    <property type="entry name" value="ACETYL-COENZYME A CARBOXYLASE CARBOXYL TRANSFERASE SUBUNIT BETA, CHLOROPLASTIC"/>
    <property type="match status" value="1"/>
</dbReference>
<dbReference type="Pfam" id="PF01039">
    <property type="entry name" value="Carboxyl_trans"/>
    <property type="match status" value="1"/>
</dbReference>
<dbReference type="Pfam" id="PF17848">
    <property type="entry name" value="Zn_ribbon_ACC"/>
    <property type="match status" value="1"/>
</dbReference>
<dbReference type="PRINTS" id="PR01070">
    <property type="entry name" value="ACCCTRFRASEB"/>
</dbReference>
<dbReference type="SUPFAM" id="SSF52096">
    <property type="entry name" value="ClpP/crotonase"/>
    <property type="match status" value="1"/>
</dbReference>
<dbReference type="PROSITE" id="PS50980">
    <property type="entry name" value="COA_CT_NTER"/>
    <property type="match status" value="1"/>
</dbReference>
<gene>
    <name evidence="1" type="primary">accD</name>
    <name type="ordered locus">YpsIP31758_1422</name>
</gene>